<accession>Q9ZP27</accession>
<evidence type="ECO:0000250" key="1"/>
<evidence type="ECO:0000250" key="2">
    <source>
        <dbReference type="UniProtKB" id="Q1XH05"/>
    </source>
</evidence>
<evidence type="ECO:0000250" key="3">
    <source>
        <dbReference type="UniProtKB" id="Q7XSK0"/>
    </source>
</evidence>
<evidence type="ECO:0000250" key="4">
    <source>
        <dbReference type="UniProtKB" id="Q9SPP9"/>
    </source>
</evidence>
<evidence type="ECO:0000269" key="5">
    <source>
    </source>
</evidence>
<evidence type="ECO:0000269" key="6">
    <source>
    </source>
</evidence>
<evidence type="ECO:0000269" key="7">
    <source>
    </source>
</evidence>
<evidence type="ECO:0000305" key="8"/>
<dbReference type="EC" id="3.2.1.188" evidence="5 6"/>
<dbReference type="EMBL" id="AF082991">
    <property type="protein sequence ID" value="AAD02839.1"/>
    <property type="molecule type" value="mRNA"/>
</dbReference>
<dbReference type="SMR" id="Q9ZP27"/>
<dbReference type="CAZy" id="GH1">
    <property type="family name" value="Glycoside Hydrolase Family 1"/>
</dbReference>
<dbReference type="SABIO-RK" id="Q9ZP27"/>
<dbReference type="GO" id="GO:0009570">
    <property type="term" value="C:chloroplast stroma"/>
    <property type="evidence" value="ECO:0007669"/>
    <property type="project" value="UniProtKB-SubCell"/>
</dbReference>
<dbReference type="GO" id="GO:0008422">
    <property type="term" value="F:beta-glucosidase activity"/>
    <property type="evidence" value="ECO:0007669"/>
    <property type="project" value="TreeGrafter"/>
</dbReference>
<dbReference type="GO" id="GO:0005975">
    <property type="term" value="P:carbohydrate metabolic process"/>
    <property type="evidence" value="ECO:0007669"/>
    <property type="project" value="InterPro"/>
</dbReference>
<dbReference type="GO" id="GO:0006952">
    <property type="term" value="P:defense response"/>
    <property type="evidence" value="ECO:0007669"/>
    <property type="project" value="UniProtKB-KW"/>
</dbReference>
<dbReference type="FunFam" id="3.20.20.80:FF:000041">
    <property type="entry name" value="Beta-glucosidase 7"/>
    <property type="match status" value="1"/>
</dbReference>
<dbReference type="Gene3D" id="3.20.20.80">
    <property type="entry name" value="Glycosidases"/>
    <property type="match status" value="1"/>
</dbReference>
<dbReference type="InterPro" id="IPR001360">
    <property type="entry name" value="Glyco_hydro_1"/>
</dbReference>
<dbReference type="InterPro" id="IPR033132">
    <property type="entry name" value="Glyco_hydro_1_N_CS"/>
</dbReference>
<dbReference type="InterPro" id="IPR017853">
    <property type="entry name" value="Glycoside_hydrolase_SF"/>
</dbReference>
<dbReference type="PANTHER" id="PTHR10353:SF326">
    <property type="entry name" value="4-HYDROXY-7-METHOXY-3-OXO-3,4-DIHYDRO-2H-1,4-BENZOXAZIN-2-YL GLUCOSIDE BETA-D-GLUCOSIDASE 1, CHLOROPLASTIC"/>
    <property type="match status" value="1"/>
</dbReference>
<dbReference type="PANTHER" id="PTHR10353">
    <property type="entry name" value="GLYCOSYL HYDROLASE"/>
    <property type="match status" value="1"/>
</dbReference>
<dbReference type="Pfam" id="PF00232">
    <property type="entry name" value="Glyco_hydro_1"/>
    <property type="match status" value="1"/>
</dbReference>
<dbReference type="PRINTS" id="PR00131">
    <property type="entry name" value="GLHYDRLASE1"/>
</dbReference>
<dbReference type="SUPFAM" id="SSF51445">
    <property type="entry name" value="(Trans)glycosidases"/>
    <property type="match status" value="1"/>
</dbReference>
<dbReference type="PROSITE" id="PS00653">
    <property type="entry name" value="GLYCOSYL_HYDROL_F1_2"/>
    <property type="match status" value="1"/>
</dbReference>
<proteinExistence type="evidence at protein level"/>
<gene>
    <name type="primary">P60B</name>
    <name type="synonym">GLU2</name>
</gene>
<reference key="1">
    <citation type="journal article" date="2000" name="J. Mol. Biol.">
        <title>Formation of fibrillar multimers of oat beta-glucosidase isoenzymes is mediated by the As-Glu1 monomer.</title>
        <authorList>
            <person name="Kim Y.W."/>
            <person name="Kang K.S."/>
            <person name="Kim S.Y."/>
            <person name="Kim I.S."/>
        </authorList>
    </citation>
    <scope>NUCLEOTIDE SEQUENCE [MRNA]</scope>
    <scope>SUBUNIT</scope>
    <scope>CATALYTIC ACTIVITY</scope>
    <scope>BIOPHYSICOCHEMICAL PROPERTIES</scope>
</reference>
<reference key="2">
    <citation type="journal article" date="1998" name="Biochim. Biophys. Acta">
        <title>Subunit composition and oligomer stability of oat beta-glucosidase isozymes.</title>
        <authorList>
            <person name="Kim Y.W."/>
            <person name="Kim I.S."/>
        </authorList>
    </citation>
    <scope>PROTEIN SEQUENCE OF 58-76</scope>
    <scope>SUBUNIT</scope>
    <source>
        <strain>cv. Garry</strain>
    </source>
</reference>
<reference key="3">
    <citation type="journal article" date="1988" name="Planta">
        <title>The stromacentre in Avena plastids: an aggregation of beta-glucosidase responsible for the activation of oat-leaf saponins.</title>
        <authorList>
            <person name="Nisius A."/>
        </authorList>
    </citation>
    <scope>FUNCTION</scope>
    <scope>CATALYTIC ACTIVITY</scope>
    <scope>BIOPHYSICOCHEMICAL PROPERTIES</scope>
    <scope>SUBCELLULAR LOCATION</scope>
</reference>
<organism>
    <name type="scientific">Avena sativa</name>
    <name type="common">Oat</name>
    <dbReference type="NCBI Taxonomy" id="4498"/>
    <lineage>
        <taxon>Eukaryota</taxon>
        <taxon>Viridiplantae</taxon>
        <taxon>Streptophyta</taxon>
        <taxon>Embryophyta</taxon>
        <taxon>Tracheophyta</taxon>
        <taxon>Spermatophyta</taxon>
        <taxon>Magnoliopsida</taxon>
        <taxon>Liliopsida</taxon>
        <taxon>Poales</taxon>
        <taxon>Poaceae</taxon>
        <taxon>BOP clade</taxon>
        <taxon>Pooideae</taxon>
        <taxon>Poodae</taxon>
        <taxon>Poeae</taxon>
        <taxon>Poeae Chloroplast Group 1 (Aveneae type)</taxon>
        <taxon>Aveninae</taxon>
        <taxon>Avena</taxon>
    </lineage>
</organism>
<comment type="function">
    <text evidence="1 6">Beta-glucosidase acting as a preformed defense system. Hydrolyzes the bisdesmosides avenacosides A and B to 26-desgluco-avenacosides exhibiting fungicidal activity. Can use beta-fucoside &gt; beta-glucoside &gt; beta-galactoside &gt; beta-xyloside as substrates, but not alpha-glycosides, beta-thioglucosides and disaccharides (By similarity).</text>
</comment>
<comment type="catalytic activity">
    <reaction evidence="5 6">
        <text>avenacoside B + H2O = 26-desgluco-avenacoside B + D-glucose</text>
        <dbReference type="Rhea" id="RHEA:38911"/>
        <dbReference type="ChEBI" id="CHEBI:2938"/>
        <dbReference type="ChEBI" id="CHEBI:4167"/>
        <dbReference type="ChEBI" id="CHEBI:15377"/>
        <dbReference type="ChEBI" id="CHEBI:75931"/>
        <dbReference type="EC" id="3.2.1.188"/>
    </reaction>
</comment>
<comment type="biophysicochemical properties">
    <kinetics>
        <KM evidence="5 6">1.48 mM for p-nitrophenyl-beta-D-glucopyranoside (with heteromultimeric recombinant enzyme)</KM>
        <KM evidence="5 6">2.47 mM for p-nitrophenyl-beta-D-glucopyranoside (with homodimeric recombinant enzyme)</KM>
    </kinetics>
</comment>
<comment type="subunit">
    <text evidence="5 7">Heteromultimer with P60A in a 1:1 stoichiometry. Aggregates to form the fibrillar stromacentre.</text>
</comment>
<comment type="subcellular location">
    <subcellularLocation>
        <location evidence="6">Plastid</location>
        <location evidence="6">Chloroplast stroma</location>
    </subcellularLocation>
    <text>Found in a fibrillar spherulite called stromacentre.</text>
</comment>
<comment type="similarity">
    <text evidence="8">Belongs to the glycosyl hydrolase 1 family.</text>
</comment>
<keyword id="KW-0150">Chloroplast</keyword>
<keyword id="KW-0903">Direct protein sequencing</keyword>
<keyword id="KW-1015">Disulfide bond</keyword>
<keyword id="KW-0326">Glycosidase</keyword>
<keyword id="KW-0378">Hydrolase</keyword>
<keyword id="KW-0611">Plant defense</keyword>
<keyword id="KW-0934">Plastid</keyword>
<keyword id="KW-0809">Transit peptide</keyword>
<feature type="transit peptide" description="Chloroplast" evidence="7">
    <location>
        <begin position="1"/>
        <end position="57"/>
    </location>
</feature>
<feature type="chain" id="PRO_0000428641" description="Avenacosidase 2">
    <location>
        <begin position="58"/>
        <end position="578"/>
    </location>
</feature>
<feature type="active site" description="Proton donor" evidence="3">
    <location>
        <position position="239"/>
    </location>
</feature>
<feature type="active site" description="Nucleophile" evidence="3">
    <location>
        <position position="454"/>
    </location>
</feature>
<feature type="binding site" evidence="3">
    <location>
        <position position="89"/>
    </location>
    <ligand>
        <name>a beta-D-glucoside</name>
        <dbReference type="ChEBI" id="CHEBI:22798"/>
    </ligand>
</feature>
<feature type="binding site" evidence="3">
    <location>
        <position position="193"/>
    </location>
    <ligand>
        <name>a beta-D-glucoside</name>
        <dbReference type="ChEBI" id="CHEBI:22798"/>
    </ligand>
</feature>
<feature type="binding site" evidence="3">
    <location>
        <begin position="238"/>
        <end position="239"/>
    </location>
    <ligand>
        <name>a beta-D-glucoside</name>
        <dbReference type="ChEBI" id="CHEBI:22798"/>
    </ligand>
</feature>
<feature type="binding site" evidence="3">
    <location>
        <position position="381"/>
    </location>
    <ligand>
        <name>a beta-D-glucoside</name>
        <dbReference type="ChEBI" id="CHEBI:22798"/>
    </ligand>
</feature>
<feature type="binding site" evidence="4">
    <location>
        <position position="454"/>
    </location>
    <ligand>
        <name>a beta-D-glucoside</name>
        <dbReference type="ChEBI" id="CHEBI:22798"/>
    </ligand>
</feature>
<feature type="binding site" evidence="3">
    <location>
        <position position="504"/>
    </location>
    <ligand>
        <name>a beta-D-glucoside</name>
        <dbReference type="ChEBI" id="CHEBI:22798"/>
    </ligand>
</feature>
<feature type="binding site" evidence="3">
    <location>
        <begin position="511"/>
        <end position="512"/>
    </location>
    <ligand>
        <name>a beta-D-glucoside</name>
        <dbReference type="ChEBI" id="CHEBI:22798"/>
    </ligand>
</feature>
<feature type="binding site" evidence="2">
    <location>
        <position position="520"/>
    </location>
    <ligand>
        <name>a beta-D-glucoside</name>
        <dbReference type="ChEBI" id="CHEBI:22798"/>
    </ligand>
</feature>
<feature type="disulfide bond" evidence="3">
    <location>
        <begin position="258"/>
        <end position="264"/>
    </location>
</feature>
<name>AVCO2_AVESA</name>
<sequence>MALLCSALSNSTHPSFRSHIAGANSENLWHLSAHPAQKSKRRCNLTLSSRAAARISSALESGKLKPWQIPKRDWFPPEFTFGAASAAYQIEGAWNEGGKGPSSWDNFCHNYPERIMDGSNWDVAANSYYMYKEDVRMLKEIGMDSYRFSISWPRILPEGTLEGGINHEGIQYYNDLLDCLIENGIKPYITLFHWDTPQALADKYNDFLDRRIVKDYTDYATVCFEHFGDKVKNWITFNEPHSFCGLAYGTGLHAPGLCSPGMDCAIPQGDALRQPYIVGHNLLLAHAETVDVYKKFYKGDDGQIGMVMDVMAYEPYGNNFVDQQAQERSIDFHIGWFLEPMVRGDYPFSMRSLVGDRLPFFTKSEQEKLVSSYDFVGINYYTARFSEHIDISPEIIPKLNTDDAYSTPEFNDSNGIPIGPDLGMYWILSYPKGLKDILLLMKEKYGNPPIYITENGTADMDGWGNPPMTDPLDDPLRIEYLQQHMTAIKEAIDLGADVRGHFTWSLIDNFEWSMGYLSRFGIVYIDRNDGFKRIMKKSAKWLKEFNGATKEVNNKILGASSCCSGELMWFLVQNPYGK</sequence>
<protein>
    <recommendedName>
        <fullName>Avenacosidase 2</fullName>
        <ecNumber evidence="5 6">3.2.1.188</ecNumber>
    </recommendedName>
    <alternativeName>
        <fullName>26-desgluco-avenacosidase 2</fullName>
    </alternativeName>
    <alternativeName>
        <fullName>Protein As-Glu2</fullName>
    </alternativeName>
</protein>